<organism>
    <name type="scientific">Vampyressa melissa</name>
    <name type="common">Melissa's yellow-eared bat</name>
    <dbReference type="NCBI Taxonomy" id="362825"/>
    <lineage>
        <taxon>Eukaryota</taxon>
        <taxon>Metazoa</taxon>
        <taxon>Chordata</taxon>
        <taxon>Craniata</taxon>
        <taxon>Vertebrata</taxon>
        <taxon>Euteleostomi</taxon>
        <taxon>Mammalia</taxon>
        <taxon>Eutheria</taxon>
        <taxon>Laurasiatheria</taxon>
        <taxon>Chiroptera</taxon>
        <taxon>Yangochiroptera</taxon>
        <taxon>Phyllostomidae</taxon>
        <taxon>Stenodermatinae</taxon>
        <taxon>Vampyressa</taxon>
    </lineage>
</organism>
<feature type="chain" id="PRO_0000275144" description="NADH-ubiquinone oxidoreductase chain 4L">
    <location>
        <begin position="1"/>
        <end position="98"/>
    </location>
</feature>
<feature type="transmembrane region" description="Helical" evidence="3">
    <location>
        <begin position="1"/>
        <end position="21"/>
    </location>
</feature>
<feature type="transmembrane region" description="Helical" evidence="3">
    <location>
        <begin position="29"/>
        <end position="49"/>
    </location>
</feature>
<feature type="transmembrane region" description="Helical" evidence="3">
    <location>
        <begin position="61"/>
        <end position="81"/>
    </location>
</feature>
<reference key="1">
    <citation type="journal article" date="2006" name="Mol. Phylogenet. Evol.">
        <title>Molecular systematics of Vampyressine bats (Phyllostomidae: Stenodermatinae) with comparison of direct and indirect surveys of mitochondrial DNA variation.</title>
        <authorList>
            <person name="Hoofer S.R."/>
            <person name="Baker R.J."/>
        </authorList>
    </citation>
    <scope>NUCLEOTIDE SEQUENCE [GENOMIC DNA]</scope>
</reference>
<protein>
    <recommendedName>
        <fullName>NADH-ubiquinone oxidoreductase chain 4L</fullName>
        <ecNumber>7.1.1.2</ecNumber>
    </recommendedName>
    <alternativeName>
        <fullName>NADH dehydrogenase subunit 4L</fullName>
    </alternativeName>
</protein>
<comment type="function">
    <text evidence="1">Core subunit of the mitochondrial membrane respiratory chain NADH dehydrogenase (Complex I) which catalyzes electron transfer from NADH through the respiratory chain, using ubiquinone as an electron acceptor. Part of the enzyme membrane arm which is embedded in the lipid bilayer and involved in proton translocation.</text>
</comment>
<comment type="catalytic activity">
    <reaction evidence="1">
        <text>a ubiquinone + NADH + 5 H(+)(in) = a ubiquinol + NAD(+) + 4 H(+)(out)</text>
        <dbReference type="Rhea" id="RHEA:29091"/>
        <dbReference type="Rhea" id="RHEA-COMP:9565"/>
        <dbReference type="Rhea" id="RHEA-COMP:9566"/>
        <dbReference type="ChEBI" id="CHEBI:15378"/>
        <dbReference type="ChEBI" id="CHEBI:16389"/>
        <dbReference type="ChEBI" id="CHEBI:17976"/>
        <dbReference type="ChEBI" id="CHEBI:57540"/>
        <dbReference type="ChEBI" id="CHEBI:57945"/>
        <dbReference type="EC" id="7.1.1.2"/>
    </reaction>
    <physiologicalReaction direction="left-to-right" evidence="1">
        <dbReference type="Rhea" id="RHEA:29092"/>
    </physiologicalReaction>
</comment>
<comment type="subunit">
    <text evidence="2">Core subunit of respiratory chain NADH dehydrogenase (Complex I) which is composed of 45 different subunits.</text>
</comment>
<comment type="subcellular location">
    <subcellularLocation>
        <location evidence="2">Mitochondrion inner membrane</location>
        <topology evidence="3">Multi-pass membrane protein</topology>
    </subcellularLocation>
</comment>
<comment type="similarity">
    <text evidence="4">Belongs to the complex I subunit 4L family.</text>
</comment>
<dbReference type="EC" id="7.1.1.2"/>
<dbReference type="EMBL" id="DQ312389">
    <property type="protein sequence ID" value="ABC47583.1"/>
    <property type="molecule type" value="Genomic_DNA"/>
</dbReference>
<dbReference type="EMBL" id="DQ312388">
    <property type="protein sequence ID" value="ABC47580.1"/>
    <property type="molecule type" value="Genomic_DNA"/>
</dbReference>
<dbReference type="SMR" id="Q1HUX8"/>
<dbReference type="GO" id="GO:0005743">
    <property type="term" value="C:mitochondrial inner membrane"/>
    <property type="evidence" value="ECO:0000250"/>
    <property type="project" value="UniProtKB"/>
</dbReference>
<dbReference type="GO" id="GO:0045271">
    <property type="term" value="C:respiratory chain complex I"/>
    <property type="evidence" value="ECO:0000250"/>
    <property type="project" value="UniProtKB"/>
</dbReference>
<dbReference type="GO" id="GO:0008137">
    <property type="term" value="F:NADH dehydrogenase (ubiquinone) activity"/>
    <property type="evidence" value="ECO:0000250"/>
    <property type="project" value="UniProtKB"/>
</dbReference>
<dbReference type="GO" id="GO:0042773">
    <property type="term" value="P:ATP synthesis coupled electron transport"/>
    <property type="evidence" value="ECO:0007669"/>
    <property type="project" value="InterPro"/>
</dbReference>
<dbReference type="FunFam" id="1.10.287.3510:FF:000002">
    <property type="entry name" value="NADH-ubiquinone oxidoreductase chain 4L"/>
    <property type="match status" value="1"/>
</dbReference>
<dbReference type="Gene3D" id="1.10.287.3510">
    <property type="match status" value="1"/>
</dbReference>
<dbReference type="InterPro" id="IPR001133">
    <property type="entry name" value="NADH_UbQ_OxRdtase_chain4L/K"/>
</dbReference>
<dbReference type="InterPro" id="IPR039428">
    <property type="entry name" value="NUOK/Mnh_C1-like"/>
</dbReference>
<dbReference type="PANTHER" id="PTHR11434:SF0">
    <property type="entry name" value="NADH-UBIQUINONE OXIDOREDUCTASE CHAIN 4L"/>
    <property type="match status" value="1"/>
</dbReference>
<dbReference type="PANTHER" id="PTHR11434">
    <property type="entry name" value="NADH-UBIQUINONE OXIDOREDUCTASE SUBUNIT ND4L"/>
    <property type="match status" value="1"/>
</dbReference>
<dbReference type="Pfam" id="PF00420">
    <property type="entry name" value="Oxidored_q2"/>
    <property type="match status" value="1"/>
</dbReference>
<gene>
    <name type="primary">MT-ND4L</name>
    <name type="synonym">MTND4L</name>
    <name type="synonym">NADH4L</name>
    <name type="synonym">ND4L</name>
</gene>
<keyword id="KW-0249">Electron transport</keyword>
<keyword id="KW-0472">Membrane</keyword>
<keyword id="KW-0496">Mitochondrion</keyword>
<keyword id="KW-0999">Mitochondrion inner membrane</keyword>
<keyword id="KW-0520">NAD</keyword>
<keyword id="KW-0679">Respiratory chain</keyword>
<keyword id="KW-1278">Translocase</keyword>
<keyword id="KW-0812">Transmembrane</keyword>
<keyword id="KW-1133">Transmembrane helix</keyword>
<keyword id="KW-0813">Transport</keyword>
<keyword id="KW-0830">Ubiquinone</keyword>
<accession>Q1HUX8</accession>
<evidence type="ECO:0000250" key="1">
    <source>
        <dbReference type="UniProtKB" id="P03901"/>
    </source>
</evidence>
<evidence type="ECO:0000250" key="2">
    <source>
        <dbReference type="UniProtKB" id="P03902"/>
    </source>
</evidence>
<evidence type="ECO:0000255" key="3"/>
<evidence type="ECO:0000305" key="4"/>
<name>NU4LM_VAMME</name>
<sequence>MSLTYMNMFMAFTISLLGLLMYRSHMMSSLLCLEGMMLSLFVMMTMAILNTHLTLASMIPIILLVFAACEAALGLSLLVMVSTTYGMDYVQNLNLLQC</sequence>
<proteinExistence type="inferred from homology"/>
<geneLocation type="mitochondrion"/>